<name>RNH2_CLONN</name>
<proteinExistence type="inferred from homology"/>
<keyword id="KW-0963">Cytoplasm</keyword>
<keyword id="KW-0255">Endonuclease</keyword>
<keyword id="KW-0378">Hydrolase</keyword>
<keyword id="KW-0464">Manganese</keyword>
<keyword id="KW-0479">Metal-binding</keyword>
<keyword id="KW-0540">Nuclease</keyword>
<keyword id="KW-1185">Reference proteome</keyword>
<evidence type="ECO:0000255" key="1">
    <source>
        <dbReference type="HAMAP-Rule" id="MF_00052"/>
    </source>
</evidence>
<evidence type="ECO:0000255" key="2">
    <source>
        <dbReference type="PROSITE-ProRule" id="PRU01319"/>
    </source>
</evidence>
<protein>
    <recommendedName>
        <fullName evidence="1">Ribonuclease HII</fullName>
        <shortName evidence="1">RNase HII</shortName>
        <ecNumber evidence="1">3.1.26.4</ecNumber>
    </recommendedName>
</protein>
<dbReference type="EC" id="3.1.26.4" evidence="1"/>
<dbReference type="EMBL" id="CP000382">
    <property type="protein sequence ID" value="ABK61890.1"/>
    <property type="molecule type" value="Genomic_DNA"/>
</dbReference>
<dbReference type="RefSeq" id="WP_011722279.1">
    <property type="nucleotide sequence ID" value="NC_008593.1"/>
</dbReference>
<dbReference type="SMR" id="A0Q0X7"/>
<dbReference type="STRING" id="386415.NT01CX_2206"/>
<dbReference type="KEGG" id="cno:NT01CX_2206"/>
<dbReference type="eggNOG" id="COG0164">
    <property type="taxonomic scope" value="Bacteria"/>
</dbReference>
<dbReference type="HOGENOM" id="CLU_036532_2_1_9"/>
<dbReference type="Proteomes" id="UP000008220">
    <property type="component" value="Chromosome"/>
</dbReference>
<dbReference type="GO" id="GO:0005737">
    <property type="term" value="C:cytoplasm"/>
    <property type="evidence" value="ECO:0007669"/>
    <property type="project" value="UniProtKB-SubCell"/>
</dbReference>
<dbReference type="GO" id="GO:0032299">
    <property type="term" value="C:ribonuclease H2 complex"/>
    <property type="evidence" value="ECO:0007669"/>
    <property type="project" value="TreeGrafter"/>
</dbReference>
<dbReference type="GO" id="GO:0030145">
    <property type="term" value="F:manganese ion binding"/>
    <property type="evidence" value="ECO:0007669"/>
    <property type="project" value="UniProtKB-UniRule"/>
</dbReference>
<dbReference type="GO" id="GO:0003723">
    <property type="term" value="F:RNA binding"/>
    <property type="evidence" value="ECO:0007669"/>
    <property type="project" value="InterPro"/>
</dbReference>
<dbReference type="GO" id="GO:0004523">
    <property type="term" value="F:RNA-DNA hybrid ribonuclease activity"/>
    <property type="evidence" value="ECO:0007669"/>
    <property type="project" value="UniProtKB-UniRule"/>
</dbReference>
<dbReference type="GO" id="GO:0043137">
    <property type="term" value="P:DNA replication, removal of RNA primer"/>
    <property type="evidence" value="ECO:0007669"/>
    <property type="project" value="TreeGrafter"/>
</dbReference>
<dbReference type="GO" id="GO:0006298">
    <property type="term" value="P:mismatch repair"/>
    <property type="evidence" value="ECO:0007669"/>
    <property type="project" value="TreeGrafter"/>
</dbReference>
<dbReference type="CDD" id="cd07182">
    <property type="entry name" value="RNase_HII_bacteria_HII_like"/>
    <property type="match status" value="1"/>
</dbReference>
<dbReference type="Gene3D" id="3.30.420.10">
    <property type="entry name" value="Ribonuclease H-like superfamily/Ribonuclease H"/>
    <property type="match status" value="1"/>
</dbReference>
<dbReference type="HAMAP" id="MF_00052_B">
    <property type="entry name" value="RNase_HII_B"/>
    <property type="match status" value="1"/>
</dbReference>
<dbReference type="InterPro" id="IPR022898">
    <property type="entry name" value="RNase_HII"/>
</dbReference>
<dbReference type="InterPro" id="IPR001352">
    <property type="entry name" value="RNase_HII/HIII"/>
</dbReference>
<dbReference type="InterPro" id="IPR024567">
    <property type="entry name" value="RNase_HII/HIII_dom"/>
</dbReference>
<dbReference type="InterPro" id="IPR012337">
    <property type="entry name" value="RNaseH-like_sf"/>
</dbReference>
<dbReference type="InterPro" id="IPR036397">
    <property type="entry name" value="RNaseH_sf"/>
</dbReference>
<dbReference type="NCBIfam" id="NF000594">
    <property type="entry name" value="PRK00015.1-1"/>
    <property type="match status" value="1"/>
</dbReference>
<dbReference type="NCBIfam" id="NF000595">
    <property type="entry name" value="PRK00015.1-3"/>
    <property type="match status" value="1"/>
</dbReference>
<dbReference type="PANTHER" id="PTHR10954">
    <property type="entry name" value="RIBONUCLEASE H2 SUBUNIT A"/>
    <property type="match status" value="1"/>
</dbReference>
<dbReference type="PANTHER" id="PTHR10954:SF18">
    <property type="entry name" value="RIBONUCLEASE HII"/>
    <property type="match status" value="1"/>
</dbReference>
<dbReference type="Pfam" id="PF01351">
    <property type="entry name" value="RNase_HII"/>
    <property type="match status" value="1"/>
</dbReference>
<dbReference type="SUPFAM" id="SSF53098">
    <property type="entry name" value="Ribonuclease H-like"/>
    <property type="match status" value="1"/>
</dbReference>
<dbReference type="PROSITE" id="PS51975">
    <property type="entry name" value="RNASE_H_2"/>
    <property type="match status" value="1"/>
</dbReference>
<reference key="1">
    <citation type="journal article" date="2006" name="Nat. Biotechnol.">
        <title>The genome and transcriptomes of the anti-tumor agent Clostridium novyi-NT.</title>
        <authorList>
            <person name="Bettegowda C."/>
            <person name="Huang X."/>
            <person name="Lin J."/>
            <person name="Cheong I."/>
            <person name="Kohli M."/>
            <person name="Szabo S.A."/>
            <person name="Zhang X."/>
            <person name="Diaz L.A. Jr."/>
            <person name="Velculescu V.E."/>
            <person name="Parmigiani G."/>
            <person name="Kinzler K.W."/>
            <person name="Vogelstein B."/>
            <person name="Zhou S."/>
        </authorList>
    </citation>
    <scope>NUCLEOTIDE SEQUENCE [LARGE SCALE GENOMIC DNA]</scope>
    <source>
        <strain>NT</strain>
    </source>
</reference>
<accession>A0Q0X7</accession>
<gene>
    <name evidence="1" type="primary">rnhB</name>
    <name type="ordered locus">NT01CX_2206</name>
</gene>
<feature type="chain" id="PRO_0000334884" description="Ribonuclease HII">
    <location>
        <begin position="1"/>
        <end position="269"/>
    </location>
</feature>
<feature type="domain" description="RNase H type-2" evidence="2">
    <location>
        <begin position="79"/>
        <end position="269"/>
    </location>
</feature>
<feature type="binding site" evidence="1">
    <location>
        <position position="85"/>
    </location>
    <ligand>
        <name>a divalent metal cation</name>
        <dbReference type="ChEBI" id="CHEBI:60240"/>
    </ligand>
</feature>
<feature type="binding site" evidence="1">
    <location>
        <position position="86"/>
    </location>
    <ligand>
        <name>a divalent metal cation</name>
        <dbReference type="ChEBI" id="CHEBI:60240"/>
    </ligand>
</feature>
<feature type="binding site" evidence="1">
    <location>
        <position position="182"/>
    </location>
    <ligand>
        <name>a divalent metal cation</name>
        <dbReference type="ChEBI" id="CHEBI:60240"/>
    </ligand>
</feature>
<organism>
    <name type="scientific">Clostridium novyi (strain NT)</name>
    <dbReference type="NCBI Taxonomy" id="386415"/>
    <lineage>
        <taxon>Bacteria</taxon>
        <taxon>Bacillati</taxon>
        <taxon>Bacillota</taxon>
        <taxon>Clostridia</taxon>
        <taxon>Eubacteriales</taxon>
        <taxon>Clostridiaceae</taxon>
        <taxon>Clostridium</taxon>
    </lineage>
</organism>
<sequence>MNIGNMKATDVKAYISNILKSEDKSIDYEALIRTLEDDNRVTVKNLGKNVIKFLENRKKERIRVRNMYEFDKKYIKSGTYLAGADEVGRGPLAGPIVAAAVVLDLDIINDENLILRINDSKKISFEVREELSKIIKERAVSYSIQEISSEEIDEKGIAWCNNEVLKRSVCNLKVDPDLVLSDGYKIKNCTINNEFVVKGDAKSASIACASIIAKVYRDNLMIEYSKKYPEYMFNKNMGYGTKEHIEAIKKFGCTKIHRKSFLKNILNTF</sequence>
<comment type="function">
    <text evidence="1">Endonuclease that specifically degrades the RNA of RNA-DNA hybrids.</text>
</comment>
<comment type="catalytic activity">
    <reaction evidence="1">
        <text>Endonucleolytic cleavage to 5'-phosphomonoester.</text>
        <dbReference type="EC" id="3.1.26.4"/>
    </reaction>
</comment>
<comment type="cofactor">
    <cofactor evidence="1">
        <name>Mn(2+)</name>
        <dbReference type="ChEBI" id="CHEBI:29035"/>
    </cofactor>
    <cofactor evidence="1">
        <name>Mg(2+)</name>
        <dbReference type="ChEBI" id="CHEBI:18420"/>
    </cofactor>
    <text evidence="1">Manganese or magnesium. Binds 1 divalent metal ion per monomer in the absence of substrate. May bind a second metal ion after substrate binding.</text>
</comment>
<comment type="subcellular location">
    <subcellularLocation>
        <location evidence="1">Cytoplasm</location>
    </subcellularLocation>
</comment>
<comment type="similarity">
    <text evidence="1">Belongs to the RNase HII family.</text>
</comment>